<dbReference type="EC" id="3.1.26.4" evidence="1"/>
<dbReference type="EMBL" id="CP000102">
    <property type="protein sequence ID" value="ABC57767.1"/>
    <property type="molecule type" value="Genomic_DNA"/>
</dbReference>
<dbReference type="RefSeq" id="WP_011406966.1">
    <property type="nucleotide sequence ID" value="NC_007681.1"/>
</dbReference>
<dbReference type="SMR" id="Q2NEI6"/>
<dbReference type="STRING" id="339860.Msp_1395"/>
<dbReference type="GeneID" id="41325967"/>
<dbReference type="KEGG" id="mst:Msp_1395"/>
<dbReference type="eggNOG" id="arCOG04121">
    <property type="taxonomic scope" value="Archaea"/>
</dbReference>
<dbReference type="HOGENOM" id="CLU_036532_0_4_2"/>
<dbReference type="OrthoDB" id="33866at2157"/>
<dbReference type="Proteomes" id="UP000001931">
    <property type="component" value="Chromosome"/>
</dbReference>
<dbReference type="GO" id="GO:0005737">
    <property type="term" value="C:cytoplasm"/>
    <property type="evidence" value="ECO:0007669"/>
    <property type="project" value="UniProtKB-SubCell"/>
</dbReference>
<dbReference type="GO" id="GO:0032299">
    <property type="term" value="C:ribonuclease H2 complex"/>
    <property type="evidence" value="ECO:0007669"/>
    <property type="project" value="TreeGrafter"/>
</dbReference>
<dbReference type="GO" id="GO:0030145">
    <property type="term" value="F:manganese ion binding"/>
    <property type="evidence" value="ECO:0007669"/>
    <property type="project" value="UniProtKB-UniRule"/>
</dbReference>
<dbReference type="GO" id="GO:0003723">
    <property type="term" value="F:RNA binding"/>
    <property type="evidence" value="ECO:0007669"/>
    <property type="project" value="InterPro"/>
</dbReference>
<dbReference type="GO" id="GO:0004523">
    <property type="term" value="F:RNA-DNA hybrid ribonuclease activity"/>
    <property type="evidence" value="ECO:0007669"/>
    <property type="project" value="UniProtKB-UniRule"/>
</dbReference>
<dbReference type="GO" id="GO:0043137">
    <property type="term" value="P:DNA replication, removal of RNA primer"/>
    <property type="evidence" value="ECO:0007669"/>
    <property type="project" value="TreeGrafter"/>
</dbReference>
<dbReference type="GO" id="GO:0006298">
    <property type="term" value="P:mismatch repair"/>
    <property type="evidence" value="ECO:0007669"/>
    <property type="project" value="TreeGrafter"/>
</dbReference>
<dbReference type="CDD" id="cd07180">
    <property type="entry name" value="RNase_HII_archaea_like"/>
    <property type="match status" value="1"/>
</dbReference>
<dbReference type="Gene3D" id="3.30.420.10">
    <property type="entry name" value="Ribonuclease H-like superfamily/Ribonuclease H"/>
    <property type="match status" value="1"/>
</dbReference>
<dbReference type="Gene3D" id="1.10.10.460">
    <property type="entry name" value="Ribonuclease hii. Domain 2"/>
    <property type="match status" value="1"/>
</dbReference>
<dbReference type="HAMAP" id="MF_00052_A">
    <property type="entry name" value="RNase_HII_A"/>
    <property type="match status" value="1"/>
</dbReference>
<dbReference type="InterPro" id="IPR004649">
    <property type="entry name" value="RNase_H2_suA"/>
</dbReference>
<dbReference type="InterPro" id="IPR001352">
    <property type="entry name" value="RNase_HII/HIII"/>
</dbReference>
<dbReference type="InterPro" id="IPR024567">
    <property type="entry name" value="RNase_HII/HIII_dom"/>
</dbReference>
<dbReference type="InterPro" id="IPR020787">
    <property type="entry name" value="RNase_HII_arc"/>
</dbReference>
<dbReference type="InterPro" id="IPR023160">
    <property type="entry name" value="RNase_HII_hlx-loop-hlx_cap_dom"/>
</dbReference>
<dbReference type="InterPro" id="IPR012337">
    <property type="entry name" value="RNaseH-like_sf"/>
</dbReference>
<dbReference type="InterPro" id="IPR036397">
    <property type="entry name" value="RNaseH_sf"/>
</dbReference>
<dbReference type="NCBIfam" id="TIGR00729">
    <property type="entry name" value="ribonuclease HII"/>
    <property type="match status" value="1"/>
</dbReference>
<dbReference type="PANTHER" id="PTHR10954:SF23">
    <property type="entry name" value="RIBONUCLEASE"/>
    <property type="match status" value="1"/>
</dbReference>
<dbReference type="PANTHER" id="PTHR10954">
    <property type="entry name" value="RIBONUCLEASE H2 SUBUNIT A"/>
    <property type="match status" value="1"/>
</dbReference>
<dbReference type="Pfam" id="PF01351">
    <property type="entry name" value="RNase_HII"/>
    <property type="match status" value="1"/>
</dbReference>
<dbReference type="SUPFAM" id="SSF53098">
    <property type="entry name" value="Ribonuclease H-like"/>
    <property type="match status" value="1"/>
</dbReference>
<dbReference type="PROSITE" id="PS51975">
    <property type="entry name" value="RNASE_H_2"/>
    <property type="match status" value="1"/>
</dbReference>
<comment type="function">
    <text evidence="1">Endonuclease that specifically degrades the RNA of RNA-DNA hybrids.</text>
</comment>
<comment type="catalytic activity">
    <reaction evidence="1">
        <text>Endonucleolytic cleavage to 5'-phosphomonoester.</text>
        <dbReference type="EC" id="3.1.26.4"/>
    </reaction>
</comment>
<comment type="cofactor">
    <cofactor evidence="1">
        <name>Mn(2+)</name>
        <dbReference type="ChEBI" id="CHEBI:29035"/>
    </cofactor>
    <cofactor evidence="1">
        <name>Mg(2+)</name>
        <dbReference type="ChEBI" id="CHEBI:18420"/>
    </cofactor>
    <text evidence="1">Manganese or magnesium. Binds 1 divalent metal ion per monomer in the absence of substrate. May bind a second metal ion after substrate binding.</text>
</comment>
<comment type="subcellular location">
    <subcellularLocation>
        <location evidence="1">Cytoplasm</location>
    </subcellularLocation>
</comment>
<comment type="similarity">
    <text evidence="1">Belongs to the RNase HII family.</text>
</comment>
<protein>
    <recommendedName>
        <fullName evidence="1">Ribonuclease HII</fullName>
        <shortName evidence="1">RNase HII</shortName>
        <ecNumber evidence="1">3.1.26.4</ecNumber>
    </recommendedName>
</protein>
<keyword id="KW-0963">Cytoplasm</keyword>
<keyword id="KW-0255">Endonuclease</keyword>
<keyword id="KW-0378">Hydrolase</keyword>
<keyword id="KW-0464">Manganese</keyword>
<keyword id="KW-0479">Metal-binding</keyword>
<keyword id="KW-0540">Nuclease</keyword>
<keyword id="KW-1185">Reference proteome</keyword>
<reference key="1">
    <citation type="journal article" date="2006" name="J. Bacteriol.">
        <title>The genome sequence of Methanosphaera stadtmanae reveals why this human intestinal archaeon is restricted to methanol and H2 for methane formation and ATP synthesis.</title>
        <authorList>
            <person name="Fricke W.F."/>
            <person name="Seedorf H."/>
            <person name="Henne A."/>
            <person name="Kruer M."/>
            <person name="Liesegang H."/>
            <person name="Hedderich R."/>
            <person name="Gottschalk G."/>
            <person name="Thauer R.K."/>
        </authorList>
    </citation>
    <scope>NUCLEOTIDE SEQUENCE [LARGE SCALE GENOMIC DNA]</scope>
    <source>
        <strain>ATCC 43021 / DSM 3091 / JCM 11832 / MCB-3</strain>
    </source>
</reference>
<organism>
    <name type="scientific">Methanosphaera stadtmanae (strain ATCC 43021 / DSM 3091 / JCM 11832 / MCB-3)</name>
    <dbReference type="NCBI Taxonomy" id="339860"/>
    <lineage>
        <taxon>Archaea</taxon>
        <taxon>Methanobacteriati</taxon>
        <taxon>Methanobacteriota</taxon>
        <taxon>Methanomada group</taxon>
        <taxon>Methanobacteria</taxon>
        <taxon>Methanobacteriales</taxon>
        <taxon>Methanobacteriaceae</taxon>
        <taxon>Methanosphaera</taxon>
    </lineage>
</organism>
<gene>
    <name evidence="1" type="primary">rnhB</name>
    <name type="ordered locus">Msp_1395</name>
</gene>
<accession>Q2NEI6</accession>
<sequence>MILDDESQILGIDEAGRGSVIGPLVIGGVLMKKKKIRFLNRIGVKDSKQLNMKKRTIISRKIKKIAQFKTIIIPAHTIDEKRNNDINLNEIETEGMEEIIKIMKPNACYIDCIDVRENRFHDKIQKINPNMTVVTEHKADETYKIVSAASIIAKVERDKQLEIIRQEYGSVGSGYPSDKNTINYLKTIKNNQFPPIIRKTWKTIENITKSTE</sequence>
<evidence type="ECO:0000255" key="1">
    <source>
        <dbReference type="HAMAP-Rule" id="MF_00052"/>
    </source>
</evidence>
<evidence type="ECO:0000255" key="2">
    <source>
        <dbReference type="PROSITE-ProRule" id="PRU01319"/>
    </source>
</evidence>
<proteinExistence type="inferred from homology"/>
<name>RNH2_METST</name>
<feature type="chain" id="PRO_0000236280" description="Ribonuclease HII">
    <location>
        <begin position="1"/>
        <end position="212"/>
    </location>
</feature>
<feature type="domain" description="RNase H type-2" evidence="2">
    <location>
        <begin position="7"/>
        <end position="212"/>
    </location>
</feature>
<feature type="binding site" evidence="1">
    <location>
        <position position="13"/>
    </location>
    <ligand>
        <name>a divalent metal cation</name>
        <dbReference type="ChEBI" id="CHEBI:60240"/>
    </ligand>
</feature>
<feature type="binding site" evidence="1">
    <location>
        <position position="14"/>
    </location>
    <ligand>
        <name>a divalent metal cation</name>
        <dbReference type="ChEBI" id="CHEBI:60240"/>
    </ligand>
</feature>
<feature type="binding site" evidence="1">
    <location>
        <position position="111"/>
    </location>
    <ligand>
        <name>a divalent metal cation</name>
        <dbReference type="ChEBI" id="CHEBI:60240"/>
    </ligand>
</feature>